<accession>P45518</accession>
<organism>
    <name type="scientific">Streptomyces coelicolor (strain ATCC BAA-471 / A3(2) / M145)</name>
    <dbReference type="NCBI Taxonomy" id="100226"/>
    <lineage>
        <taxon>Bacteria</taxon>
        <taxon>Bacillati</taxon>
        <taxon>Actinomycetota</taxon>
        <taxon>Actinomycetes</taxon>
        <taxon>Kitasatosporales</taxon>
        <taxon>Streptomycetaceae</taxon>
        <taxon>Streptomyces</taxon>
        <taxon>Streptomyces albidoflavus group</taxon>
    </lineage>
</organism>
<sequence>MAGPTTAERGARQQESSGPPRVRRFRPPRLRTIIILAVALVLVAGGTVWVLYGSNWTRLERVSVSGTDVLTPAQVREAADVPVGDPLVSVDTEAVEARLRRKLPRIDEVDVERSWPHGIGLKVTERTPVLIVQKGRNFVEVDDEGVRFATVSKAPKDVPTLELEPARSGSAAASLRRFDDDRLVREAVRVAGRLPDKVARDTRVVKVRSYDDISLELSGGRTVSWGSGEQGVRKARALTALMKATPDARHFDVSVATAPASSGS</sequence>
<gene>
    <name evidence="1" type="primary">ftsQ</name>
    <name type="ordered locus">SCO2083</name>
    <name type="ORF">SC4A10.16c</name>
</gene>
<reference key="1">
    <citation type="journal article" date="1996" name="J. Bacteriol.">
        <title>Cell division gene ftsQ is required for efficient sporulation but not growth and viability in Streptomyces coelicolor A3(2).</title>
        <authorList>
            <person name="McCormick J.R."/>
            <person name="Losick R."/>
        </authorList>
    </citation>
    <scope>NUCLEOTIDE SEQUENCE [GENOMIC DNA]</scope>
    <source>
        <strain>A3(2) / NRRL B-16638</strain>
    </source>
</reference>
<reference key="2">
    <citation type="journal article" date="2002" name="Nature">
        <title>Complete genome sequence of the model actinomycete Streptomyces coelicolor A3(2).</title>
        <authorList>
            <person name="Bentley S.D."/>
            <person name="Chater K.F."/>
            <person name="Cerdeno-Tarraga A.-M."/>
            <person name="Challis G.L."/>
            <person name="Thomson N.R."/>
            <person name="James K.D."/>
            <person name="Harris D.E."/>
            <person name="Quail M.A."/>
            <person name="Kieser H."/>
            <person name="Harper D."/>
            <person name="Bateman A."/>
            <person name="Brown S."/>
            <person name="Chandra G."/>
            <person name="Chen C.W."/>
            <person name="Collins M."/>
            <person name="Cronin A."/>
            <person name="Fraser A."/>
            <person name="Goble A."/>
            <person name="Hidalgo J."/>
            <person name="Hornsby T."/>
            <person name="Howarth S."/>
            <person name="Huang C.-H."/>
            <person name="Kieser T."/>
            <person name="Larke L."/>
            <person name="Murphy L.D."/>
            <person name="Oliver K."/>
            <person name="O'Neil S."/>
            <person name="Rabbinowitsch E."/>
            <person name="Rajandream M.A."/>
            <person name="Rutherford K.M."/>
            <person name="Rutter S."/>
            <person name="Seeger K."/>
            <person name="Saunders D."/>
            <person name="Sharp S."/>
            <person name="Squares R."/>
            <person name="Squares S."/>
            <person name="Taylor K."/>
            <person name="Warren T."/>
            <person name="Wietzorrek A."/>
            <person name="Woodward J.R."/>
            <person name="Barrell B.G."/>
            <person name="Parkhill J."/>
            <person name="Hopwood D.A."/>
        </authorList>
    </citation>
    <scope>NUCLEOTIDE SEQUENCE [LARGE SCALE GENOMIC DNA]</scope>
    <source>
        <strain>ATCC BAA-471 / A3(2) / M145</strain>
    </source>
</reference>
<reference key="3">
    <citation type="journal article" date="1994" name="Mol. Microbiol.">
        <title>Growth and viability of Streptomyces coelicolor mutant for the cell division gene ftsZ.</title>
        <authorList>
            <person name="McCormick J.R."/>
            <person name="Su E.P."/>
            <person name="Driks A."/>
            <person name="Losick R."/>
        </authorList>
    </citation>
    <scope>NUCLEOTIDE SEQUENCE [GENOMIC DNA] OF 236-264</scope>
    <source>
        <strain>A3(2) / NRRL B-16638</strain>
    </source>
</reference>
<proteinExistence type="inferred from homology"/>
<protein>
    <recommendedName>
        <fullName evidence="1">Cell division protein FtsQ</fullName>
    </recommendedName>
</protein>
<name>FTSQ_STRCO</name>
<keyword id="KW-0131">Cell cycle</keyword>
<keyword id="KW-0132">Cell division</keyword>
<keyword id="KW-1003">Cell membrane</keyword>
<keyword id="KW-0472">Membrane</keyword>
<keyword id="KW-1185">Reference proteome</keyword>
<keyword id="KW-0812">Transmembrane</keyword>
<keyword id="KW-1133">Transmembrane helix</keyword>
<comment type="function">
    <text evidence="1">Essential cell division protein.</text>
</comment>
<comment type="subcellular location">
    <subcellularLocation>
        <location evidence="1">Cell membrane</location>
        <topology evidence="1">Single-pass type II membrane protein</topology>
    </subcellularLocation>
    <text evidence="1">Localizes to the division septum.</text>
</comment>
<comment type="similarity">
    <text evidence="1">Belongs to the FtsQ/DivIB family. FtsQ subfamily.</text>
</comment>
<evidence type="ECO:0000255" key="1">
    <source>
        <dbReference type="HAMAP-Rule" id="MF_00911"/>
    </source>
</evidence>
<evidence type="ECO:0000255" key="2">
    <source>
        <dbReference type="PROSITE-ProRule" id="PRU01115"/>
    </source>
</evidence>
<evidence type="ECO:0000256" key="3">
    <source>
        <dbReference type="SAM" id="MobiDB-lite"/>
    </source>
</evidence>
<feature type="chain" id="PRO_0000160586" description="Cell division protein FtsQ">
    <location>
        <begin position="1"/>
        <end position="264"/>
    </location>
</feature>
<feature type="topological domain" description="Cytoplasmic" evidence="1">
    <location>
        <begin position="1"/>
        <end position="32"/>
    </location>
</feature>
<feature type="transmembrane region" description="Helical" evidence="1">
    <location>
        <begin position="33"/>
        <end position="53"/>
    </location>
</feature>
<feature type="topological domain" description="Extracellular" evidence="1">
    <location>
        <begin position="54"/>
        <end position="264"/>
    </location>
</feature>
<feature type="domain" description="POTRA" evidence="2">
    <location>
        <begin position="57"/>
        <end position="126"/>
    </location>
</feature>
<feature type="region of interest" description="Disordered" evidence="3">
    <location>
        <begin position="1"/>
        <end position="24"/>
    </location>
</feature>
<dbReference type="EMBL" id="U10879">
    <property type="protein sequence ID" value="AAD10532.1"/>
    <property type="molecule type" value="Genomic_DNA"/>
</dbReference>
<dbReference type="EMBL" id="AL939111">
    <property type="protein sequence ID" value="CAB51992.1"/>
    <property type="molecule type" value="Genomic_DNA"/>
</dbReference>
<dbReference type="PIR" id="T34953">
    <property type="entry name" value="T34953"/>
</dbReference>
<dbReference type="RefSeq" id="NP_626342.1">
    <property type="nucleotide sequence ID" value="NC_003888.3"/>
</dbReference>
<dbReference type="RefSeq" id="WP_003976732.1">
    <property type="nucleotide sequence ID" value="NZ_VNID01000001.1"/>
</dbReference>
<dbReference type="SMR" id="P45518"/>
<dbReference type="STRING" id="100226.gene:17759681"/>
<dbReference type="PaxDb" id="100226-SCO2083"/>
<dbReference type="KEGG" id="sco:SCO2083"/>
<dbReference type="PATRIC" id="fig|100226.15.peg.2116"/>
<dbReference type="eggNOG" id="COG1589">
    <property type="taxonomic scope" value="Bacteria"/>
</dbReference>
<dbReference type="HOGENOM" id="CLU_047677_1_0_11"/>
<dbReference type="InParanoid" id="P45518"/>
<dbReference type="OrthoDB" id="9790760at2"/>
<dbReference type="PhylomeDB" id="P45518"/>
<dbReference type="Proteomes" id="UP000001973">
    <property type="component" value="Chromosome"/>
</dbReference>
<dbReference type="GO" id="GO:0032153">
    <property type="term" value="C:cell division site"/>
    <property type="evidence" value="ECO:0007669"/>
    <property type="project" value="UniProtKB-UniRule"/>
</dbReference>
<dbReference type="GO" id="GO:0005886">
    <property type="term" value="C:plasma membrane"/>
    <property type="evidence" value="ECO:0007669"/>
    <property type="project" value="UniProtKB-SubCell"/>
</dbReference>
<dbReference type="GO" id="GO:0090529">
    <property type="term" value="P:cell septum assembly"/>
    <property type="evidence" value="ECO:0007669"/>
    <property type="project" value="InterPro"/>
</dbReference>
<dbReference type="GO" id="GO:0043093">
    <property type="term" value="P:FtsZ-dependent cytokinesis"/>
    <property type="evidence" value="ECO:0007669"/>
    <property type="project" value="UniProtKB-UniRule"/>
</dbReference>
<dbReference type="Gene3D" id="3.10.20.310">
    <property type="entry name" value="membrane protein fhac"/>
    <property type="match status" value="1"/>
</dbReference>
<dbReference type="HAMAP" id="MF_00911">
    <property type="entry name" value="FtsQ_subfam"/>
    <property type="match status" value="1"/>
</dbReference>
<dbReference type="InterPro" id="IPR026579">
    <property type="entry name" value="FtsQ"/>
</dbReference>
<dbReference type="InterPro" id="IPR050487">
    <property type="entry name" value="FtsQ_DivIB"/>
</dbReference>
<dbReference type="InterPro" id="IPR034746">
    <property type="entry name" value="POTRA"/>
</dbReference>
<dbReference type="InterPro" id="IPR013685">
    <property type="entry name" value="POTRA_FtsQ_type"/>
</dbReference>
<dbReference type="PANTHER" id="PTHR37820">
    <property type="entry name" value="CELL DIVISION PROTEIN DIVIB"/>
    <property type="match status" value="1"/>
</dbReference>
<dbReference type="PANTHER" id="PTHR37820:SF1">
    <property type="entry name" value="CELL DIVISION PROTEIN FTSQ"/>
    <property type="match status" value="1"/>
</dbReference>
<dbReference type="Pfam" id="PF08478">
    <property type="entry name" value="POTRA_1"/>
    <property type="match status" value="1"/>
</dbReference>
<dbReference type="PROSITE" id="PS51779">
    <property type="entry name" value="POTRA"/>
    <property type="match status" value="1"/>
</dbReference>